<accession>Q8NW59</accession>
<gene>
    <name evidence="1" type="primary">accD</name>
    <name type="ordered locus">MW1644</name>
</gene>
<dbReference type="EC" id="2.1.3.15" evidence="1"/>
<dbReference type="EMBL" id="BA000033">
    <property type="protein sequence ID" value="BAB95509.1"/>
    <property type="molecule type" value="Genomic_DNA"/>
</dbReference>
<dbReference type="RefSeq" id="WP_000471572.1">
    <property type="nucleotide sequence ID" value="NC_003923.1"/>
</dbReference>
<dbReference type="SMR" id="Q8NW59"/>
<dbReference type="KEGG" id="sam:MW1644"/>
<dbReference type="HOGENOM" id="CLU_015486_1_0_9"/>
<dbReference type="UniPathway" id="UPA00655">
    <property type="reaction ID" value="UER00711"/>
</dbReference>
<dbReference type="GO" id="GO:0009317">
    <property type="term" value="C:acetyl-CoA carboxylase complex"/>
    <property type="evidence" value="ECO:0007669"/>
    <property type="project" value="InterPro"/>
</dbReference>
<dbReference type="GO" id="GO:0003989">
    <property type="term" value="F:acetyl-CoA carboxylase activity"/>
    <property type="evidence" value="ECO:0007669"/>
    <property type="project" value="InterPro"/>
</dbReference>
<dbReference type="GO" id="GO:0005524">
    <property type="term" value="F:ATP binding"/>
    <property type="evidence" value="ECO:0007669"/>
    <property type="project" value="UniProtKB-KW"/>
</dbReference>
<dbReference type="GO" id="GO:0016743">
    <property type="term" value="F:carboxyl- or carbamoyltransferase activity"/>
    <property type="evidence" value="ECO:0007669"/>
    <property type="project" value="UniProtKB-UniRule"/>
</dbReference>
<dbReference type="GO" id="GO:0008270">
    <property type="term" value="F:zinc ion binding"/>
    <property type="evidence" value="ECO:0007669"/>
    <property type="project" value="UniProtKB-UniRule"/>
</dbReference>
<dbReference type="GO" id="GO:0006633">
    <property type="term" value="P:fatty acid biosynthetic process"/>
    <property type="evidence" value="ECO:0007669"/>
    <property type="project" value="UniProtKB-KW"/>
</dbReference>
<dbReference type="GO" id="GO:2001295">
    <property type="term" value="P:malonyl-CoA biosynthetic process"/>
    <property type="evidence" value="ECO:0007669"/>
    <property type="project" value="UniProtKB-UniRule"/>
</dbReference>
<dbReference type="Gene3D" id="3.90.226.10">
    <property type="entry name" value="2-enoyl-CoA Hydratase, Chain A, domain 1"/>
    <property type="match status" value="1"/>
</dbReference>
<dbReference type="HAMAP" id="MF_01395">
    <property type="entry name" value="AcetylCoA_CT_beta"/>
    <property type="match status" value="1"/>
</dbReference>
<dbReference type="InterPro" id="IPR034733">
    <property type="entry name" value="AcCoA_carboxyl_beta"/>
</dbReference>
<dbReference type="InterPro" id="IPR000438">
    <property type="entry name" value="Acetyl_CoA_COase_Trfase_b_su"/>
</dbReference>
<dbReference type="InterPro" id="IPR029045">
    <property type="entry name" value="ClpP/crotonase-like_dom_sf"/>
</dbReference>
<dbReference type="InterPro" id="IPR011762">
    <property type="entry name" value="COA_CT_N"/>
</dbReference>
<dbReference type="InterPro" id="IPR041010">
    <property type="entry name" value="Znf-ACC"/>
</dbReference>
<dbReference type="NCBIfam" id="TIGR00515">
    <property type="entry name" value="accD"/>
    <property type="match status" value="1"/>
</dbReference>
<dbReference type="PANTHER" id="PTHR42995">
    <property type="entry name" value="ACETYL-COENZYME A CARBOXYLASE CARBOXYL TRANSFERASE SUBUNIT BETA, CHLOROPLASTIC"/>
    <property type="match status" value="1"/>
</dbReference>
<dbReference type="PANTHER" id="PTHR42995:SF5">
    <property type="entry name" value="ACETYL-COENZYME A CARBOXYLASE CARBOXYL TRANSFERASE SUBUNIT BETA, CHLOROPLASTIC"/>
    <property type="match status" value="1"/>
</dbReference>
<dbReference type="Pfam" id="PF01039">
    <property type="entry name" value="Carboxyl_trans"/>
    <property type="match status" value="1"/>
</dbReference>
<dbReference type="Pfam" id="PF17848">
    <property type="entry name" value="Zn_ribbon_ACC"/>
    <property type="match status" value="1"/>
</dbReference>
<dbReference type="PRINTS" id="PR01070">
    <property type="entry name" value="ACCCTRFRASEB"/>
</dbReference>
<dbReference type="SUPFAM" id="SSF52096">
    <property type="entry name" value="ClpP/crotonase"/>
    <property type="match status" value="1"/>
</dbReference>
<dbReference type="PROSITE" id="PS50980">
    <property type="entry name" value="COA_CT_NTER"/>
    <property type="match status" value="1"/>
</dbReference>
<name>ACCD_STAAW</name>
<proteinExistence type="inferred from homology"/>
<keyword id="KW-0067">ATP-binding</keyword>
<keyword id="KW-0963">Cytoplasm</keyword>
<keyword id="KW-0275">Fatty acid biosynthesis</keyword>
<keyword id="KW-0276">Fatty acid metabolism</keyword>
<keyword id="KW-0444">Lipid biosynthesis</keyword>
<keyword id="KW-0443">Lipid metabolism</keyword>
<keyword id="KW-0479">Metal-binding</keyword>
<keyword id="KW-0547">Nucleotide-binding</keyword>
<keyword id="KW-0808">Transferase</keyword>
<keyword id="KW-0862">Zinc</keyword>
<keyword id="KW-0863">Zinc-finger</keyword>
<comment type="function">
    <text evidence="1">Component of the acetyl coenzyme A carboxylase (ACC) complex. Biotin carboxylase (BC) catalyzes the carboxylation of biotin on its carrier protein (BCCP) and then the CO(2) group is transferred by the transcarboxylase to acetyl-CoA to form malonyl-CoA.</text>
</comment>
<comment type="catalytic activity">
    <reaction evidence="1">
        <text>N(6)-carboxybiotinyl-L-lysyl-[protein] + acetyl-CoA = N(6)-biotinyl-L-lysyl-[protein] + malonyl-CoA</text>
        <dbReference type="Rhea" id="RHEA:54728"/>
        <dbReference type="Rhea" id="RHEA-COMP:10505"/>
        <dbReference type="Rhea" id="RHEA-COMP:10506"/>
        <dbReference type="ChEBI" id="CHEBI:57288"/>
        <dbReference type="ChEBI" id="CHEBI:57384"/>
        <dbReference type="ChEBI" id="CHEBI:83144"/>
        <dbReference type="ChEBI" id="CHEBI:83145"/>
        <dbReference type="EC" id="2.1.3.15"/>
    </reaction>
</comment>
<comment type="cofactor">
    <cofactor evidence="1">
        <name>Zn(2+)</name>
        <dbReference type="ChEBI" id="CHEBI:29105"/>
    </cofactor>
    <text evidence="1">Binds 1 zinc ion per subunit.</text>
</comment>
<comment type="pathway">
    <text evidence="1">Lipid metabolism; malonyl-CoA biosynthesis; malonyl-CoA from acetyl-CoA: step 1/1.</text>
</comment>
<comment type="subunit">
    <text evidence="1">Acetyl-CoA carboxylase is a heterohexamer composed of biotin carboxyl carrier protein (AccB), biotin carboxylase (AccC) and two subunits each of ACCase subunit alpha (AccA) and ACCase subunit beta (AccD).</text>
</comment>
<comment type="subcellular location">
    <subcellularLocation>
        <location evidence="1">Cytoplasm</location>
    </subcellularLocation>
</comment>
<comment type="similarity">
    <text evidence="1">Belongs to the AccD/PCCB family.</text>
</comment>
<protein>
    <recommendedName>
        <fullName evidence="1">Acetyl-coenzyme A carboxylase carboxyl transferase subunit beta</fullName>
        <shortName evidence="1">ACCase subunit beta</shortName>
        <shortName evidence="1">Acetyl-CoA carboxylase carboxyltransferase subunit beta</shortName>
        <ecNumber evidence="1">2.1.3.15</ecNumber>
    </recommendedName>
</protein>
<organism>
    <name type="scientific">Staphylococcus aureus (strain MW2)</name>
    <dbReference type="NCBI Taxonomy" id="196620"/>
    <lineage>
        <taxon>Bacteria</taxon>
        <taxon>Bacillati</taxon>
        <taxon>Bacillota</taxon>
        <taxon>Bacilli</taxon>
        <taxon>Bacillales</taxon>
        <taxon>Staphylococcaceae</taxon>
        <taxon>Staphylococcus</taxon>
    </lineage>
</organism>
<reference key="1">
    <citation type="journal article" date="2002" name="Lancet">
        <title>Genome and virulence determinants of high virulence community-acquired MRSA.</title>
        <authorList>
            <person name="Baba T."/>
            <person name="Takeuchi F."/>
            <person name="Kuroda M."/>
            <person name="Yuzawa H."/>
            <person name="Aoki K."/>
            <person name="Oguchi A."/>
            <person name="Nagai Y."/>
            <person name="Iwama N."/>
            <person name="Asano K."/>
            <person name="Naimi T."/>
            <person name="Kuroda H."/>
            <person name="Cui L."/>
            <person name="Yamamoto K."/>
            <person name="Hiramatsu K."/>
        </authorList>
    </citation>
    <scope>NUCLEOTIDE SEQUENCE [LARGE SCALE GENOMIC DNA]</scope>
    <source>
        <strain>MW2</strain>
    </source>
</reference>
<sequence length="285" mass="31871">MFKDFFNRTKKKKYLTVQDSKNNDVPAGIMTKCPKCKKIMYTKELAENLNVCFNCDHHIALTAYKRIEAISDEGSFTEFDKGMTSANPLDFPSYLEKIEKDQQKTGLKEAVVTGTAQLDGMKFGVAVMDSRFRMGSMGSVIGEKICRIIDYCTENRLPFILFSASGGARMQEGIISLMQMGKTSVSLKRHSDAGLLYISYLTHPTTGGVSASFASVGDINLSEPKALIGFAGRRVIEQTINEKLPDDFQTAEFLLEHGQLDKVVHRNNMRQTLSEILKIHQEVTK</sequence>
<feature type="chain" id="PRO_0000389855" description="Acetyl-coenzyme A carboxylase carboxyl transferase subunit beta">
    <location>
        <begin position="1"/>
        <end position="285"/>
    </location>
</feature>
<feature type="domain" description="CoA carboxyltransferase N-terminal" evidence="2">
    <location>
        <begin position="29"/>
        <end position="285"/>
    </location>
</feature>
<feature type="zinc finger region" description="C4-type" evidence="1">
    <location>
        <begin position="33"/>
        <end position="55"/>
    </location>
</feature>
<feature type="binding site" evidence="1">
    <location>
        <position position="33"/>
    </location>
    <ligand>
        <name>Zn(2+)</name>
        <dbReference type="ChEBI" id="CHEBI:29105"/>
    </ligand>
</feature>
<feature type="binding site" evidence="1">
    <location>
        <position position="36"/>
    </location>
    <ligand>
        <name>Zn(2+)</name>
        <dbReference type="ChEBI" id="CHEBI:29105"/>
    </ligand>
</feature>
<feature type="binding site" evidence="1">
    <location>
        <position position="52"/>
    </location>
    <ligand>
        <name>Zn(2+)</name>
        <dbReference type="ChEBI" id="CHEBI:29105"/>
    </ligand>
</feature>
<feature type="binding site" evidence="1">
    <location>
        <position position="55"/>
    </location>
    <ligand>
        <name>Zn(2+)</name>
        <dbReference type="ChEBI" id="CHEBI:29105"/>
    </ligand>
</feature>
<evidence type="ECO:0000255" key="1">
    <source>
        <dbReference type="HAMAP-Rule" id="MF_01395"/>
    </source>
</evidence>
<evidence type="ECO:0000255" key="2">
    <source>
        <dbReference type="PROSITE-ProRule" id="PRU01136"/>
    </source>
</evidence>